<feature type="chain" id="PRO_1000001765" description="Phosphate acyltransferase">
    <location>
        <begin position="1"/>
        <end position="348"/>
    </location>
</feature>
<evidence type="ECO:0000255" key="1">
    <source>
        <dbReference type="HAMAP-Rule" id="MF_00019"/>
    </source>
</evidence>
<reference key="1">
    <citation type="journal article" date="2007" name="PLoS ONE">
        <title>Complete genomic characterization of a pathogenic A.II strain of Francisella tularensis subspecies tularensis.</title>
        <authorList>
            <person name="Beckstrom-Sternberg S.M."/>
            <person name="Auerbach R.K."/>
            <person name="Godbole S."/>
            <person name="Pearson J.V."/>
            <person name="Beckstrom-Sternberg J.S."/>
            <person name="Deng Z."/>
            <person name="Munk C."/>
            <person name="Kubota K."/>
            <person name="Zhou Y."/>
            <person name="Bruce D."/>
            <person name="Noronha J."/>
            <person name="Scheuermann R.H."/>
            <person name="Wang A."/>
            <person name="Wei X."/>
            <person name="Wang J."/>
            <person name="Hao J."/>
            <person name="Wagner D.M."/>
            <person name="Brettin T.S."/>
            <person name="Brown N."/>
            <person name="Gilna P."/>
            <person name="Keim P.S."/>
        </authorList>
    </citation>
    <scope>NUCLEOTIDE SEQUENCE [LARGE SCALE GENOMIC DNA]</scope>
    <source>
        <strain>WY96-3418</strain>
    </source>
</reference>
<organism>
    <name type="scientific">Francisella tularensis subsp. tularensis (strain WY96-3418)</name>
    <dbReference type="NCBI Taxonomy" id="418136"/>
    <lineage>
        <taxon>Bacteria</taxon>
        <taxon>Pseudomonadati</taxon>
        <taxon>Pseudomonadota</taxon>
        <taxon>Gammaproteobacteria</taxon>
        <taxon>Thiotrichales</taxon>
        <taxon>Francisellaceae</taxon>
        <taxon>Francisella</taxon>
    </lineage>
</organism>
<accession>A4IWY2</accession>
<dbReference type="EC" id="2.3.1.274" evidence="1"/>
<dbReference type="EMBL" id="CP000608">
    <property type="protein sequence ID" value="ABO46434.1"/>
    <property type="molecule type" value="Genomic_DNA"/>
</dbReference>
<dbReference type="RefSeq" id="WP_003016130.1">
    <property type="nucleotide sequence ID" value="NC_009257.1"/>
</dbReference>
<dbReference type="SMR" id="A4IWY2"/>
<dbReference type="KEGG" id="ftw:FTW_0519"/>
<dbReference type="HOGENOM" id="CLU_039379_1_0_6"/>
<dbReference type="UniPathway" id="UPA00085"/>
<dbReference type="GO" id="GO:0005737">
    <property type="term" value="C:cytoplasm"/>
    <property type="evidence" value="ECO:0007669"/>
    <property type="project" value="UniProtKB-SubCell"/>
</dbReference>
<dbReference type="GO" id="GO:0043811">
    <property type="term" value="F:phosphate:acyl-[acyl carrier protein] acyltransferase activity"/>
    <property type="evidence" value="ECO:0007669"/>
    <property type="project" value="UniProtKB-UniRule"/>
</dbReference>
<dbReference type="GO" id="GO:0006633">
    <property type="term" value="P:fatty acid biosynthetic process"/>
    <property type="evidence" value="ECO:0007669"/>
    <property type="project" value="UniProtKB-UniRule"/>
</dbReference>
<dbReference type="GO" id="GO:0008654">
    <property type="term" value="P:phospholipid biosynthetic process"/>
    <property type="evidence" value="ECO:0007669"/>
    <property type="project" value="UniProtKB-KW"/>
</dbReference>
<dbReference type="Gene3D" id="3.40.718.10">
    <property type="entry name" value="Isopropylmalate Dehydrogenase"/>
    <property type="match status" value="1"/>
</dbReference>
<dbReference type="HAMAP" id="MF_00019">
    <property type="entry name" value="PlsX"/>
    <property type="match status" value="1"/>
</dbReference>
<dbReference type="InterPro" id="IPR003664">
    <property type="entry name" value="FA_synthesis"/>
</dbReference>
<dbReference type="InterPro" id="IPR012281">
    <property type="entry name" value="Phospholipid_synth_PlsX-like"/>
</dbReference>
<dbReference type="NCBIfam" id="TIGR00182">
    <property type="entry name" value="plsX"/>
    <property type="match status" value="1"/>
</dbReference>
<dbReference type="PANTHER" id="PTHR30100">
    <property type="entry name" value="FATTY ACID/PHOSPHOLIPID SYNTHESIS PROTEIN PLSX"/>
    <property type="match status" value="1"/>
</dbReference>
<dbReference type="PANTHER" id="PTHR30100:SF1">
    <property type="entry name" value="PHOSPHATE ACYLTRANSFERASE"/>
    <property type="match status" value="1"/>
</dbReference>
<dbReference type="Pfam" id="PF02504">
    <property type="entry name" value="FA_synthesis"/>
    <property type="match status" value="1"/>
</dbReference>
<dbReference type="PIRSF" id="PIRSF002465">
    <property type="entry name" value="Phsphlp_syn_PlsX"/>
    <property type="match status" value="1"/>
</dbReference>
<dbReference type="SUPFAM" id="SSF53659">
    <property type="entry name" value="Isocitrate/Isopropylmalate dehydrogenase-like"/>
    <property type="match status" value="1"/>
</dbReference>
<proteinExistence type="inferred from homology"/>
<comment type="function">
    <text evidence="1">Catalyzes the reversible formation of acyl-phosphate (acyl-PO(4)) from acyl-[acyl-carrier-protein] (acyl-ACP). This enzyme utilizes acyl-ACP as fatty acyl donor, but not acyl-CoA.</text>
</comment>
<comment type="catalytic activity">
    <reaction evidence="1">
        <text>a fatty acyl-[ACP] + phosphate = an acyl phosphate + holo-[ACP]</text>
        <dbReference type="Rhea" id="RHEA:42292"/>
        <dbReference type="Rhea" id="RHEA-COMP:9685"/>
        <dbReference type="Rhea" id="RHEA-COMP:14125"/>
        <dbReference type="ChEBI" id="CHEBI:43474"/>
        <dbReference type="ChEBI" id="CHEBI:59918"/>
        <dbReference type="ChEBI" id="CHEBI:64479"/>
        <dbReference type="ChEBI" id="CHEBI:138651"/>
        <dbReference type="EC" id="2.3.1.274"/>
    </reaction>
</comment>
<comment type="pathway">
    <text evidence="1">Lipid metabolism; phospholipid metabolism.</text>
</comment>
<comment type="subunit">
    <text evidence="1">Homodimer. Probably interacts with PlsY.</text>
</comment>
<comment type="subcellular location">
    <subcellularLocation>
        <location evidence="1">Cytoplasm</location>
    </subcellularLocation>
    <text evidence="1">Associated with the membrane possibly through PlsY.</text>
</comment>
<comment type="similarity">
    <text evidence="1">Belongs to the PlsX family.</text>
</comment>
<sequence length="348" mass="37840">MGYKISIDAMGGDHGLNTTIPAALEAVKKDSNLQIVLVGDHHKIKRALDRYSKVKKIKLPVLQRIAIHHASETVGMDESPSIAVRKKKDSSMRVAINLVKDRTVDACVSAGNTGALMATSKFVLKTINGVDRPAIVYALPAFNRETKQLSKTYMLDLGANVVCTSEQLFQFAIMGSILAASSKGIAEPRVSLLNIGEEEMKGLDNIKNAAKLLQGCDFINYNGYIEGKYIFDDTTDVIVCDGFVGNVSLKTMEGSLRLIESLIKKTIQESSLLMKIPIVMALPIFKKMKKGMNLDSFNGASLLGLTGIVVKSHGGASANAFETAIYEAIKEIKYNIPKTIQESLEKVL</sequence>
<keyword id="KW-0963">Cytoplasm</keyword>
<keyword id="KW-0444">Lipid biosynthesis</keyword>
<keyword id="KW-0443">Lipid metabolism</keyword>
<keyword id="KW-0594">Phospholipid biosynthesis</keyword>
<keyword id="KW-1208">Phospholipid metabolism</keyword>
<keyword id="KW-0808">Transferase</keyword>
<protein>
    <recommendedName>
        <fullName evidence="1">Phosphate acyltransferase</fullName>
        <ecNumber evidence="1">2.3.1.274</ecNumber>
    </recommendedName>
    <alternativeName>
        <fullName evidence="1">Acyl-ACP phosphotransacylase</fullName>
    </alternativeName>
    <alternativeName>
        <fullName evidence="1">Acyl-[acyl-carrier-protein]--phosphate acyltransferase</fullName>
    </alternativeName>
    <alternativeName>
        <fullName evidence="1">Phosphate-acyl-ACP acyltransferase</fullName>
    </alternativeName>
</protein>
<name>PLSX_FRATW</name>
<gene>
    <name evidence="1" type="primary">plsX</name>
    <name type="ordered locus">FTW_0519</name>
</gene>